<feature type="chain" id="PRO_0000339827" description="UPF0597 protein FMG_0209">
    <location>
        <begin position="1"/>
        <end position="417"/>
    </location>
</feature>
<keyword id="KW-1185">Reference proteome</keyword>
<sequence>MKNYTELLKSELIMALGCTEPISIALAAAKAREVLGDIPTKIEVKCSGNIIKNVKGVTVPNTNGMKGVEAATAIGTVAGDSSLGLEVLSKVTDEDIKAAKCMLDNNIIKVSLKEGVENLDIEIVAEDDKENTVDVEIKNKHTNIVKVTKNDKVIHIDNCYTHTPEYENYDELSVKDIFEYANNVDLDEVRDLLEDQITLNSKISDEGLTGKWGVAMGKILMDEDDSIRSKAKARAAAGSDARMSGCSLPVVINAGSGNQGITCTMPLVVFANEKNYDRETLYRGLLITNLVALHIKRFIGRLSAFCGVTSAGVAAGAGICYMETKNLDLIEKTIGNALMIASGMICDGAKPSCAAKIATAVDAGISGYYLAKNNRNFEAGDGLLKDDIEETIRSIGYVAKEGMKETDIVVLHTMIEK</sequence>
<protein>
    <recommendedName>
        <fullName evidence="1">UPF0597 protein FMG_0209</fullName>
    </recommendedName>
</protein>
<evidence type="ECO:0000255" key="1">
    <source>
        <dbReference type="HAMAP-Rule" id="MF_01845"/>
    </source>
</evidence>
<comment type="similarity">
    <text evidence="1">Belongs to the UPF0597 family.</text>
</comment>
<proteinExistence type="inferred from homology"/>
<accession>B0S032</accession>
<organism>
    <name type="scientific">Finegoldia magna (strain ATCC 29328 / DSM 20472 / WAL 2508)</name>
    <name type="common">Peptostreptococcus magnus</name>
    <dbReference type="NCBI Taxonomy" id="334413"/>
    <lineage>
        <taxon>Bacteria</taxon>
        <taxon>Bacillati</taxon>
        <taxon>Bacillota</taxon>
        <taxon>Tissierellia</taxon>
        <taxon>Tissierellales</taxon>
        <taxon>Peptoniphilaceae</taxon>
        <taxon>Finegoldia</taxon>
    </lineage>
</organism>
<dbReference type="EMBL" id="AP008971">
    <property type="protein sequence ID" value="BAG07627.1"/>
    <property type="molecule type" value="Genomic_DNA"/>
</dbReference>
<dbReference type="RefSeq" id="WP_012290236.1">
    <property type="nucleotide sequence ID" value="NC_010376.1"/>
</dbReference>
<dbReference type="SMR" id="B0S032"/>
<dbReference type="STRING" id="334413.FMG_0209"/>
<dbReference type="KEGG" id="fma:FMG_0209"/>
<dbReference type="eggNOG" id="COG3681">
    <property type="taxonomic scope" value="Bacteria"/>
</dbReference>
<dbReference type="HOGENOM" id="CLU_051840_0_0_9"/>
<dbReference type="Proteomes" id="UP000001319">
    <property type="component" value="Chromosome"/>
</dbReference>
<dbReference type="GO" id="GO:0080146">
    <property type="term" value="F:L-cysteine desulfhydrase activity"/>
    <property type="evidence" value="ECO:0007669"/>
    <property type="project" value="TreeGrafter"/>
</dbReference>
<dbReference type="GO" id="GO:0019450">
    <property type="term" value="P:L-cysteine catabolic process to pyruvate"/>
    <property type="evidence" value="ECO:0007669"/>
    <property type="project" value="TreeGrafter"/>
</dbReference>
<dbReference type="HAMAP" id="MF_01845">
    <property type="entry name" value="UPF0597"/>
    <property type="match status" value="1"/>
</dbReference>
<dbReference type="InterPro" id="IPR005130">
    <property type="entry name" value="Ser_deHydtase-like_asu"/>
</dbReference>
<dbReference type="InterPro" id="IPR021144">
    <property type="entry name" value="UPF0597"/>
</dbReference>
<dbReference type="PANTHER" id="PTHR30501">
    <property type="entry name" value="UPF0597 PROTEIN YHAM"/>
    <property type="match status" value="1"/>
</dbReference>
<dbReference type="PANTHER" id="PTHR30501:SF2">
    <property type="entry name" value="UPF0597 PROTEIN YHAM"/>
    <property type="match status" value="1"/>
</dbReference>
<dbReference type="Pfam" id="PF03313">
    <property type="entry name" value="SDH_alpha"/>
    <property type="match status" value="1"/>
</dbReference>
<dbReference type="PIRSF" id="PIRSF006054">
    <property type="entry name" value="UCP006054"/>
    <property type="match status" value="1"/>
</dbReference>
<name>Y209_FINM2</name>
<gene>
    <name type="ordered locus">FMG_0209</name>
</gene>
<reference key="1">
    <citation type="journal article" date="2008" name="DNA Res.">
        <title>Complete genome sequence of Finegoldia magna, an anaerobic opportunistic pathogen.</title>
        <authorList>
            <person name="Goto T."/>
            <person name="Yamashita A."/>
            <person name="Hirakawa H."/>
            <person name="Matsutani M."/>
            <person name="Todo K."/>
            <person name="Ohshima K."/>
            <person name="Toh H."/>
            <person name="Miyamoto K."/>
            <person name="Kuhara S."/>
            <person name="Hattori M."/>
            <person name="Shimizu T."/>
            <person name="Akimoto S."/>
        </authorList>
    </citation>
    <scope>NUCLEOTIDE SEQUENCE [LARGE SCALE GENOMIC DNA]</scope>
    <source>
        <strain>ATCC 29328 / DSM 20472 / WAL 2508</strain>
    </source>
</reference>